<feature type="signal peptide" evidence="3 4 5">
    <location>
        <begin position="1"/>
        <end position="32"/>
    </location>
</feature>
<feature type="chain" id="PRO_0000025403" description="Caltrin">
    <location>
        <begin position="33"/>
        <end position="80"/>
    </location>
</feature>
<protein>
    <recommendedName>
        <fullName>Caltrin</fullName>
    </recommendedName>
    <alternativeName>
        <fullName>Calcium transport inhibitor</fullName>
    </alternativeName>
    <alternativeName>
        <fullName>Peptide YY-2</fullName>
        <shortName>Peptide YY2</shortName>
    </alternativeName>
    <alternativeName>
        <fullName>Seminalplasmin</fullName>
        <shortName>SPLN</shortName>
    </alternativeName>
</protein>
<reference key="1">
    <citation type="journal article" date="1990" name="DNA Cell Biol.">
        <title>Characterization by cDNA cloning of the mRNA for seminalplasmin, the major basic protein of bull semen.</title>
        <authorList>
            <person name="Wagner S."/>
            <person name="Freudenstein J."/>
            <person name="Scheit K.H."/>
        </authorList>
    </citation>
    <scope>NUCLEOTIDE SEQUENCE [MRNA]</scope>
</reference>
<reference key="2">
    <citation type="journal article" date="1993" name="Biochim. Biophys. Acta">
        <title>Characterization of the gene for seminalplasmin, a secretory protein of the bovine seminal vesicle.</title>
        <authorList>
            <person name="Kleine Kuhlmann J."/>
            <person name="Scheit K.K."/>
        </authorList>
    </citation>
    <scope>NUCLEOTIDE SEQUENCE [GENOMIC DNA]</scope>
    <source>
        <tissue>Seminal vesicle</tissue>
    </source>
</reference>
<reference key="3">
    <citation type="journal article" date="1985" name="Proc. Natl. Acad. Sci. U.S.A.">
        <title>The structure of caltrin, the calcium-transport inhibitor of bovine seminal plasma.</title>
        <authorList>
            <person name="Lewis R.V."/>
            <person name="San Agustin J."/>
            <person name="Kruggel W."/>
            <person name="Lardy H.A."/>
        </authorList>
    </citation>
    <scope>PROTEIN SEQUENCE OF 33-79</scope>
</reference>
<reference key="4">
    <citation type="journal article" date="1983" name="EMBO J.">
        <title>Amino acid sequence of seminalplasmin, an antimicrobial protein from bull semen.</title>
        <authorList>
            <person name="Theil R."/>
            <person name="Scheit K.H."/>
        </authorList>
    </citation>
    <scope>PROTEIN SEQUENCE OF 33-79</scope>
</reference>
<reference key="5">
    <citation type="journal article" date="1986" name="FEBS Lett.">
        <title>Seminalplasmin and caltrin are the same protein.</title>
        <authorList>
            <person name="Sitaram N."/>
            <person name="Kumari V.K."/>
            <person name="Bhargava P.M."/>
        </authorList>
    </citation>
    <scope>PROTEIN SEQUENCE OF 33-77</scope>
</reference>
<reference key="6">
    <citation type="journal article" date="1990" name="Biol. Chem. Hoppe-Seyler">
        <title>Functional properties of peptides derived from seminalplasmin: binding to monospecific anti-seminalplasmin immunoglobulins G and calmodulin.</title>
        <authorList>
            <person name="Krauhs E."/>
            <person name="Preuss K.D."/>
            <person name="Scheit K.H."/>
        </authorList>
    </citation>
    <scope>FUNCTION</scope>
</reference>
<reference key="7">
    <citation type="journal article" date="1995" name="Bioessays">
        <title>Seminal plasmin.</title>
        <authorList>
            <person name="Sitaram N."/>
            <person name="Nagaraj R."/>
        </authorList>
    </citation>
    <scope>REVIEW</scope>
</reference>
<accession>P06833</accession>
<comment type="function">
    <text evidence="1">Inhibits calcium transport into spermatozoa; it does not bind directly to calcium. Binds to calmodulin. Inhibits the growth of microorganisms. Seem to act as an antibiotic by permeabilizing the bacterial membrane.</text>
</comment>
<comment type="caution">
    <text evidence="2">It is uncertain whether Met-1 or Met-11 is the initiator.</text>
</comment>
<comment type="sequence caution" evidence="2">
    <conflict type="miscellaneous discrepancy" ref="3"/>
    <text>Transposition of two peptides and an extra Lys.</text>
</comment>
<organism>
    <name type="scientific">Bos taurus</name>
    <name type="common">Bovine</name>
    <dbReference type="NCBI Taxonomy" id="9913"/>
    <lineage>
        <taxon>Eukaryota</taxon>
        <taxon>Metazoa</taxon>
        <taxon>Chordata</taxon>
        <taxon>Craniata</taxon>
        <taxon>Vertebrata</taxon>
        <taxon>Euteleostomi</taxon>
        <taxon>Mammalia</taxon>
        <taxon>Eutheria</taxon>
        <taxon>Laurasiatheria</taxon>
        <taxon>Artiodactyla</taxon>
        <taxon>Ruminantia</taxon>
        <taxon>Pecora</taxon>
        <taxon>Bovidae</taxon>
        <taxon>Bovinae</taxon>
        <taxon>Bos</taxon>
    </lineage>
</organism>
<sequence>MMAGRRSWPAMATVLLALLVCLGELVDSKPQPSDEKASPDKHHRFSLSRYAKLANRLANPKLLETFLSKWIGDRGNRSVK</sequence>
<gene>
    <name type="primary">PYY2</name>
</gene>
<proteinExistence type="evidence at protein level"/>
<name>PYY2_BOVIN</name>
<evidence type="ECO:0000269" key="1">
    <source>
    </source>
</evidence>
<evidence type="ECO:0000305" key="2"/>
<evidence type="ECO:0000305" key="3">
    <source>
    </source>
</evidence>
<evidence type="ECO:0000305" key="4">
    <source>
    </source>
</evidence>
<evidence type="ECO:0000305" key="5">
    <source>
    </source>
</evidence>
<dbReference type="EMBL" id="M36982">
    <property type="protein sequence ID" value="AAA30759.1"/>
    <property type="molecule type" value="mRNA"/>
</dbReference>
<dbReference type="EMBL" id="X62310">
    <property type="protein sequence ID" value="CAA44190.1"/>
    <property type="molecule type" value="Genomic_DNA"/>
</dbReference>
<dbReference type="PIR" id="A35572">
    <property type="entry name" value="A35572"/>
</dbReference>
<dbReference type="RefSeq" id="NP_776381.1">
    <property type="nucleotide sequence ID" value="NM_173956.2"/>
</dbReference>
<dbReference type="STRING" id="9913.ENSBTAP00000054402"/>
<dbReference type="TCDB" id="8.A.106.1.1">
    <property type="family name" value="the caltrin/peptide yy (caltrin) family"/>
</dbReference>
<dbReference type="PaxDb" id="9913-ENSBTAP00000054402"/>
<dbReference type="Ensembl" id="ENSBTAT00000065967.3">
    <property type="protein sequence ID" value="ENSBTAP00000054402.1"/>
    <property type="gene ID" value="ENSBTAG00000045652.3"/>
</dbReference>
<dbReference type="GeneID" id="280905"/>
<dbReference type="KEGG" id="bta:280905"/>
<dbReference type="CTD" id="23615"/>
<dbReference type="VEuPathDB" id="HostDB:ENSBTAG00000045652"/>
<dbReference type="GeneTree" id="ENSGT00740000117120"/>
<dbReference type="HOGENOM" id="CLU_2573321_0_0_1"/>
<dbReference type="InParanoid" id="P06833"/>
<dbReference type="OMA" id="SWPAMAI"/>
<dbReference type="OrthoDB" id="10455134at2759"/>
<dbReference type="Proteomes" id="UP000009136">
    <property type="component" value="Chromosome 19"/>
</dbReference>
<dbReference type="Bgee" id="ENSBTAG00000045652">
    <property type="expression patterns" value="Expressed in mammary gland fat and 56 other cell types or tissues"/>
</dbReference>
<dbReference type="GO" id="GO:0005615">
    <property type="term" value="C:extracellular space"/>
    <property type="evidence" value="ECO:0000318"/>
    <property type="project" value="GO_Central"/>
</dbReference>
<dbReference type="GO" id="GO:0005516">
    <property type="term" value="F:calmodulin binding"/>
    <property type="evidence" value="ECO:0007669"/>
    <property type="project" value="UniProtKB-KW"/>
</dbReference>
<dbReference type="GO" id="GO:0005184">
    <property type="term" value="F:neuropeptide hormone activity"/>
    <property type="evidence" value="ECO:0000318"/>
    <property type="project" value="GO_Central"/>
</dbReference>
<dbReference type="GO" id="GO:0031841">
    <property type="term" value="F:neuropeptide Y receptor binding"/>
    <property type="evidence" value="ECO:0000318"/>
    <property type="project" value="GO_Central"/>
</dbReference>
<dbReference type="GO" id="GO:0042742">
    <property type="term" value="P:defense response to bacterium"/>
    <property type="evidence" value="ECO:0007669"/>
    <property type="project" value="UniProtKB-KW"/>
</dbReference>
<dbReference type="GO" id="GO:0007631">
    <property type="term" value="P:feeding behavior"/>
    <property type="evidence" value="ECO:0000318"/>
    <property type="project" value="GO_Central"/>
</dbReference>
<dbReference type="GO" id="GO:0007218">
    <property type="term" value="P:neuropeptide signaling pathway"/>
    <property type="evidence" value="ECO:0000318"/>
    <property type="project" value="GO_Central"/>
</dbReference>
<keyword id="KW-0044">Antibiotic</keyword>
<keyword id="KW-0929">Antimicrobial</keyword>
<keyword id="KW-0106">Calcium</keyword>
<keyword id="KW-0112">Calmodulin-binding</keyword>
<keyword id="KW-0903">Direct protein sequencing</keyword>
<keyword id="KW-1185">Reference proteome</keyword>
<keyword id="KW-0732">Signal</keyword>